<protein>
    <recommendedName>
        <fullName evidence="1">UPF0391 membrane protein Tbd_2772</fullName>
    </recommendedName>
</protein>
<comment type="subcellular location">
    <subcellularLocation>
        <location evidence="1">Cell membrane</location>
        <topology evidence="1">Multi-pass membrane protein</topology>
    </subcellularLocation>
</comment>
<comment type="similarity">
    <text evidence="1">Belongs to the UPF0391 family.</text>
</comment>
<sequence>MFGWAITFLVIAIAAGIFGFAGLAGTAAWIAKVLFVVGLAAVLIMLVMGRRPPTV</sequence>
<feature type="chain" id="PRO_0000256794" description="UPF0391 membrane protein Tbd_2772">
    <location>
        <begin position="1"/>
        <end position="55"/>
    </location>
</feature>
<feature type="transmembrane region" description="Helical" evidence="1">
    <location>
        <begin position="1"/>
        <end position="21"/>
    </location>
</feature>
<feature type="transmembrane region" description="Helical" evidence="1">
    <location>
        <begin position="28"/>
        <end position="48"/>
    </location>
</feature>
<gene>
    <name type="ordered locus">Tbd_2772</name>
</gene>
<name>Y2772_THIDA</name>
<organism>
    <name type="scientific">Thiobacillus denitrificans (strain ATCC 25259 / T1)</name>
    <dbReference type="NCBI Taxonomy" id="292415"/>
    <lineage>
        <taxon>Bacteria</taxon>
        <taxon>Pseudomonadati</taxon>
        <taxon>Pseudomonadota</taxon>
        <taxon>Betaproteobacteria</taxon>
        <taxon>Nitrosomonadales</taxon>
        <taxon>Thiobacillaceae</taxon>
        <taxon>Thiobacillus</taxon>
    </lineage>
</organism>
<reference key="1">
    <citation type="journal article" date="2006" name="J. Bacteriol.">
        <title>The genome sequence of the obligately chemolithoautotrophic, facultatively anaerobic bacterium Thiobacillus denitrificans.</title>
        <authorList>
            <person name="Beller H.R."/>
            <person name="Chain P.S."/>
            <person name="Letain T.E."/>
            <person name="Chakicherla A."/>
            <person name="Larimer F.W."/>
            <person name="Richardson P.M."/>
            <person name="Coleman M.A."/>
            <person name="Wood A.P."/>
            <person name="Kelly D.P."/>
        </authorList>
    </citation>
    <scope>NUCLEOTIDE SEQUENCE [LARGE SCALE GENOMIC DNA]</scope>
    <source>
        <strain>ATCC 25259 / T1</strain>
    </source>
</reference>
<dbReference type="EMBL" id="CP000116">
    <property type="protein sequence ID" value="AAZ98725.1"/>
    <property type="molecule type" value="Genomic_DNA"/>
</dbReference>
<dbReference type="RefSeq" id="WP_011313284.1">
    <property type="nucleotide sequence ID" value="NC_007404.1"/>
</dbReference>
<dbReference type="STRING" id="292415.Tbd_2772"/>
<dbReference type="KEGG" id="tbd:Tbd_2772"/>
<dbReference type="eggNOG" id="COG5487">
    <property type="taxonomic scope" value="Bacteria"/>
</dbReference>
<dbReference type="HOGENOM" id="CLU_187346_2_1_4"/>
<dbReference type="Proteomes" id="UP000008291">
    <property type="component" value="Chromosome"/>
</dbReference>
<dbReference type="GO" id="GO:0005886">
    <property type="term" value="C:plasma membrane"/>
    <property type="evidence" value="ECO:0007669"/>
    <property type="project" value="UniProtKB-SubCell"/>
</dbReference>
<dbReference type="HAMAP" id="MF_01361">
    <property type="entry name" value="UPF0391"/>
    <property type="match status" value="1"/>
</dbReference>
<dbReference type="InterPro" id="IPR009760">
    <property type="entry name" value="DUF1328"/>
</dbReference>
<dbReference type="NCBIfam" id="NF010229">
    <property type="entry name" value="PRK13682.1-4"/>
    <property type="match status" value="1"/>
</dbReference>
<dbReference type="Pfam" id="PF07043">
    <property type="entry name" value="DUF1328"/>
    <property type="match status" value="1"/>
</dbReference>
<dbReference type="PIRSF" id="PIRSF036466">
    <property type="entry name" value="UCP036466"/>
    <property type="match status" value="1"/>
</dbReference>
<evidence type="ECO:0000255" key="1">
    <source>
        <dbReference type="HAMAP-Rule" id="MF_01361"/>
    </source>
</evidence>
<proteinExistence type="inferred from homology"/>
<accession>Q3SF89</accession>
<keyword id="KW-1003">Cell membrane</keyword>
<keyword id="KW-0472">Membrane</keyword>
<keyword id="KW-1185">Reference proteome</keyword>
<keyword id="KW-0812">Transmembrane</keyword>
<keyword id="KW-1133">Transmembrane helix</keyword>